<comment type="function">
    <text evidence="2 3">Catalytic subunit of the V1 complex of vacuolar(H+)-ATPase (V-ATPase), a multisubunit enzyme composed of a peripheral complex (V1) that hydrolyzes ATP and a membrane integral complex (V0) that translocates protons (By similarity). V-ATPase is responsible for acidifying and maintaining the pH of intracellular compartments and in some cell types, is targeted to the plasma membrane, where it is responsible for acidifying the extracellular environment (By similarity).</text>
</comment>
<comment type="catalytic activity">
    <reaction evidence="3">
        <text>ATP + H2O + 4 H(+)(in) = ADP + phosphate + 5 H(+)(out)</text>
        <dbReference type="Rhea" id="RHEA:57720"/>
        <dbReference type="ChEBI" id="CHEBI:15377"/>
        <dbReference type="ChEBI" id="CHEBI:15378"/>
        <dbReference type="ChEBI" id="CHEBI:30616"/>
        <dbReference type="ChEBI" id="CHEBI:43474"/>
        <dbReference type="ChEBI" id="CHEBI:456216"/>
        <dbReference type="EC" id="7.1.2.2"/>
    </reaction>
</comment>
<comment type="activity regulation">
    <text evidence="1">ATP hydrolysis occurs at the interface between the nucleotide-binding domains of subunits A and B (By similarity). ATP hydrolysis triggers a conformational change in the subunits D and F, which induces a shift of subunit d (By similarity). The c-ring is subsequently rotated and results in a continuous proton translocation across the membrane (By similarity).</text>
</comment>
<comment type="subunit">
    <text evidence="2">V-ATPase is a heteromultimeric enzyme made up of two complexes: the ATP-hydrolytic V1 complex and the proton translocation V0 complex (By similarity). The V1 complex consists of three catalytic AB heterodimers that form a heterohexamer, three peripheral stalks each consisting of EG heterodimers, one central rotor including subunits D and F, and the regulatory subunits C and H (By similarity). The proton translocation complex V0 consists of the proton transport subunit a, a ring of proteolipid subunits c9c'', rotary subunit d, subunits e and f, and the accessory subunits VhaAC45 and ATP6AP2 (By similarity).</text>
</comment>
<comment type="similarity">
    <text evidence="5">Belongs to the ATPase alpha/beta chains family.</text>
</comment>
<accession>P48602</accession>
<accession>Q541D0</accession>
<accession>Q9V3M7</accession>
<name>VATA1_DROME</name>
<gene>
    <name type="primary">Vha68-1</name>
    <name type="synonym">Vha68</name>
    <name type="synonym">VhaA</name>
    <name type="synonym">Vhaa1</name>
    <name type="ORF">CG12403</name>
</gene>
<evidence type="ECO:0000250" key="1">
    <source>
        <dbReference type="UniProtKB" id="P31404"/>
    </source>
</evidence>
<evidence type="ECO:0000250" key="2">
    <source>
        <dbReference type="UniProtKB" id="P38606"/>
    </source>
</evidence>
<evidence type="ECO:0000250" key="3">
    <source>
        <dbReference type="UniProtKB" id="P50516"/>
    </source>
</evidence>
<evidence type="ECO:0000255" key="4"/>
<evidence type="ECO:0000305" key="5"/>
<dbReference type="EC" id="7.1.2.2" evidence="3"/>
<dbReference type="EMBL" id="U19745">
    <property type="protein sequence ID" value="AAA61761.2"/>
    <property type="molecule type" value="mRNA"/>
</dbReference>
<dbReference type="EMBL" id="AF185049">
    <property type="protein sequence ID" value="AAF00515.1"/>
    <property type="molecule type" value="Genomic_DNA"/>
</dbReference>
<dbReference type="EMBL" id="AE014134">
    <property type="protein sequence ID" value="AAF53236.1"/>
    <property type="molecule type" value="Genomic_DNA"/>
</dbReference>
<dbReference type="EMBL" id="AY089512">
    <property type="protein sequence ID" value="AAL90250.1"/>
    <property type="molecule type" value="mRNA"/>
</dbReference>
<dbReference type="RefSeq" id="NP_001260426.1">
    <property type="nucleotide sequence ID" value="NM_001273497.1"/>
</dbReference>
<dbReference type="RefSeq" id="NP_523560.2">
    <property type="nucleotide sequence ID" value="NM_078836.3"/>
</dbReference>
<dbReference type="SMR" id="P48602"/>
<dbReference type="BioGRID" id="69803">
    <property type="interactions" value="10"/>
</dbReference>
<dbReference type="DIP" id="DIP-20617N"/>
<dbReference type="FunCoup" id="P48602">
    <property type="interactions" value="1560"/>
</dbReference>
<dbReference type="IntAct" id="P48602">
    <property type="interactions" value="14"/>
</dbReference>
<dbReference type="STRING" id="7227.FBpp0080010"/>
<dbReference type="PaxDb" id="7227-FBpp0080010"/>
<dbReference type="DNASU" id="45668"/>
<dbReference type="EnsemblMetazoa" id="FBtr0080429">
    <property type="protein sequence ID" value="FBpp0080010"/>
    <property type="gene ID" value="FBgn0265262"/>
</dbReference>
<dbReference type="EnsemblMetazoa" id="FBtr0336618">
    <property type="protein sequence ID" value="FBpp0307601"/>
    <property type="gene ID" value="FBgn0265262"/>
</dbReference>
<dbReference type="GeneID" id="45668"/>
<dbReference type="KEGG" id="dme:Dmel_CG12403"/>
<dbReference type="UCSC" id="CG12403-RA">
    <property type="organism name" value="d. melanogaster"/>
</dbReference>
<dbReference type="AGR" id="FB:FBgn0265262"/>
<dbReference type="CTD" id="45668"/>
<dbReference type="FlyBase" id="FBgn0265262">
    <property type="gene designation" value="Vha68-1"/>
</dbReference>
<dbReference type="VEuPathDB" id="VectorBase:FBgn0265262"/>
<dbReference type="eggNOG" id="KOG1352">
    <property type="taxonomic scope" value="Eukaryota"/>
</dbReference>
<dbReference type="GeneTree" id="ENSGT00550000074787"/>
<dbReference type="HOGENOM" id="CLU_008162_3_1_1"/>
<dbReference type="InParanoid" id="P48602"/>
<dbReference type="OMA" id="SDARKYP"/>
<dbReference type="OrthoDB" id="1676488at2759"/>
<dbReference type="PhylomeDB" id="P48602"/>
<dbReference type="BioGRID-ORCS" id="45668">
    <property type="hits" value="0 hits in 3 CRISPR screens"/>
</dbReference>
<dbReference type="GenomeRNAi" id="45668"/>
<dbReference type="PRO" id="PR:P48602"/>
<dbReference type="Proteomes" id="UP000000803">
    <property type="component" value="Chromosome 2L"/>
</dbReference>
<dbReference type="Bgee" id="FBgn0265262">
    <property type="expression patterns" value="Expressed in head capsule and 198 other cell types or tissues"/>
</dbReference>
<dbReference type="ExpressionAtlas" id="P48602">
    <property type="expression patterns" value="baseline and differential"/>
</dbReference>
<dbReference type="GO" id="GO:0033176">
    <property type="term" value="C:proton-transporting V-type ATPase complex"/>
    <property type="evidence" value="ECO:0000250"/>
    <property type="project" value="FlyBase"/>
</dbReference>
<dbReference type="GO" id="GO:0000221">
    <property type="term" value="C:vacuolar proton-transporting V-type ATPase, V1 domain"/>
    <property type="evidence" value="ECO:0000250"/>
    <property type="project" value="FlyBase"/>
</dbReference>
<dbReference type="GO" id="GO:0005524">
    <property type="term" value="F:ATP binding"/>
    <property type="evidence" value="ECO:0007669"/>
    <property type="project" value="UniProtKB-KW"/>
</dbReference>
<dbReference type="GO" id="GO:0016887">
    <property type="term" value="F:ATP hydrolysis activity"/>
    <property type="evidence" value="ECO:0007669"/>
    <property type="project" value="InterPro"/>
</dbReference>
<dbReference type="GO" id="GO:0046961">
    <property type="term" value="F:proton-transporting ATPase activity, rotational mechanism"/>
    <property type="evidence" value="ECO:0000318"/>
    <property type="project" value="GO_Central"/>
</dbReference>
<dbReference type="GO" id="GO:0046034">
    <property type="term" value="P:ATP metabolic process"/>
    <property type="evidence" value="ECO:0007669"/>
    <property type="project" value="InterPro"/>
</dbReference>
<dbReference type="GO" id="GO:0071456">
    <property type="term" value="P:cellular response to hypoxia"/>
    <property type="evidence" value="ECO:0000315"/>
    <property type="project" value="FlyBase"/>
</dbReference>
<dbReference type="GO" id="GO:1902600">
    <property type="term" value="P:proton transmembrane transport"/>
    <property type="evidence" value="ECO:0000318"/>
    <property type="project" value="GO_Central"/>
</dbReference>
<dbReference type="GO" id="GO:0007035">
    <property type="term" value="P:vacuolar acidification"/>
    <property type="evidence" value="ECO:0000250"/>
    <property type="project" value="UniProtKB"/>
</dbReference>
<dbReference type="CDD" id="cd18111">
    <property type="entry name" value="ATP-synt_V_A-type_alpha_C"/>
    <property type="match status" value="1"/>
</dbReference>
<dbReference type="CDD" id="cd18119">
    <property type="entry name" value="ATP-synt_V_A-type_alpha_N"/>
    <property type="match status" value="1"/>
</dbReference>
<dbReference type="CDD" id="cd01134">
    <property type="entry name" value="V_A-ATPase_A"/>
    <property type="match status" value="1"/>
</dbReference>
<dbReference type="FunFam" id="1.10.1140.10:FF:000002">
    <property type="entry name" value="V-type proton ATPase catalytic subunit A"/>
    <property type="match status" value="1"/>
</dbReference>
<dbReference type="FunFam" id="2.40.30.20:FF:000002">
    <property type="entry name" value="V-type proton ATPase catalytic subunit A"/>
    <property type="match status" value="1"/>
</dbReference>
<dbReference type="FunFam" id="2.40.50.100:FF:000008">
    <property type="entry name" value="V-type proton ATPase catalytic subunit A"/>
    <property type="match status" value="1"/>
</dbReference>
<dbReference type="FunFam" id="3.40.50.300:FF:000052">
    <property type="entry name" value="V-type proton ATPase catalytic subunit A"/>
    <property type="match status" value="1"/>
</dbReference>
<dbReference type="Gene3D" id="2.40.30.20">
    <property type="match status" value="1"/>
</dbReference>
<dbReference type="Gene3D" id="2.40.50.100">
    <property type="match status" value="1"/>
</dbReference>
<dbReference type="Gene3D" id="1.10.1140.10">
    <property type="entry name" value="Bovine Mitochondrial F1-atpase, Atp Synthase Beta Chain, Chain D, domain 3"/>
    <property type="match status" value="1"/>
</dbReference>
<dbReference type="Gene3D" id="3.40.50.300">
    <property type="entry name" value="P-loop containing nucleotide triphosphate hydrolases"/>
    <property type="match status" value="1"/>
</dbReference>
<dbReference type="HAMAP" id="MF_00309">
    <property type="entry name" value="ATP_synth_A_arch"/>
    <property type="match status" value="1"/>
</dbReference>
<dbReference type="InterPro" id="IPR055190">
    <property type="entry name" value="ATP-synt_VA_C"/>
</dbReference>
<dbReference type="InterPro" id="IPR031686">
    <property type="entry name" value="ATP-synth_a_Xtn"/>
</dbReference>
<dbReference type="InterPro" id="IPR023366">
    <property type="entry name" value="ATP_synth_asu-like_sf"/>
</dbReference>
<dbReference type="InterPro" id="IPR020003">
    <property type="entry name" value="ATPase_a/bsu_AS"/>
</dbReference>
<dbReference type="InterPro" id="IPR004100">
    <property type="entry name" value="ATPase_F1/V1/A1_a/bsu_N"/>
</dbReference>
<dbReference type="InterPro" id="IPR036121">
    <property type="entry name" value="ATPase_F1/V1/A1_a/bsu_N_sf"/>
</dbReference>
<dbReference type="InterPro" id="IPR000194">
    <property type="entry name" value="ATPase_F1/V1/A1_a/bsu_nucl-bd"/>
</dbReference>
<dbReference type="InterPro" id="IPR024034">
    <property type="entry name" value="ATPase_F1/V1_b/a_C"/>
</dbReference>
<dbReference type="InterPro" id="IPR005725">
    <property type="entry name" value="ATPase_V1-cplx_asu"/>
</dbReference>
<dbReference type="InterPro" id="IPR027417">
    <property type="entry name" value="P-loop_NTPase"/>
</dbReference>
<dbReference type="InterPro" id="IPR022878">
    <property type="entry name" value="V-ATPase_asu"/>
</dbReference>
<dbReference type="NCBIfam" id="NF003220">
    <property type="entry name" value="PRK04192.1"/>
    <property type="match status" value="1"/>
</dbReference>
<dbReference type="NCBIfam" id="TIGR01042">
    <property type="entry name" value="V-ATPase_V1_A"/>
    <property type="match status" value="1"/>
</dbReference>
<dbReference type="PANTHER" id="PTHR43607:SF1">
    <property type="entry name" value="H(+)-TRANSPORTING TWO-SECTOR ATPASE"/>
    <property type="match status" value="1"/>
</dbReference>
<dbReference type="PANTHER" id="PTHR43607">
    <property type="entry name" value="V-TYPE PROTON ATPASE CATALYTIC SUBUNIT A"/>
    <property type="match status" value="1"/>
</dbReference>
<dbReference type="Pfam" id="PF00006">
    <property type="entry name" value="ATP-synt_ab"/>
    <property type="match status" value="1"/>
</dbReference>
<dbReference type="Pfam" id="PF02874">
    <property type="entry name" value="ATP-synt_ab_N"/>
    <property type="match status" value="1"/>
</dbReference>
<dbReference type="Pfam" id="PF16886">
    <property type="entry name" value="ATP-synt_ab_Xtn"/>
    <property type="match status" value="1"/>
</dbReference>
<dbReference type="Pfam" id="PF22919">
    <property type="entry name" value="ATP-synt_VA_C"/>
    <property type="match status" value="1"/>
</dbReference>
<dbReference type="SUPFAM" id="SSF47917">
    <property type="entry name" value="C-terminal domain of alpha and beta subunits of F1 ATP synthase"/>
    <property type="match status" value="1"/>
</dbReference>
<dbReference type="SUPFAM" id="SSF50615">
    <property type="entry name" value="N-terminal domain of alpha and beta subunits of F1 ATP synthase"/>
    <property type="match status" value="1"/>
</dbReference>
<dbReference type="SUPFAM" id="SSF52540">
    <property type="entry name" value="P-loop containing nucleoside triphosphate hydrolases"/>
    <property type="match status" value="1"/>
</dbReference>
<dbReference type="PROSITE" id="PS00152">
    <property type="entry name" value="ATPASE_ALPHA_BETA"/>
    <property type="match status" value="1"/>
</dbReference>
<sequence>MSNLRKFKDEERESEYGRVYAVSGPVVTAEAMSGSAMYELVRVGYYELVGEIIRLEGDMATIQVYEETSGVTVGDPVLRTGKPLSVELGPGIMGSIFDGIQRPLRDIGVMTNSIYIPKGVNTTALSRSEMWEFNPLNVRVGSHITGGDLYGVVHENTLVKQRMIVAPRAKGTVRYIAPAGNYNLEDIVLETEFDGEITKHTMLQVWPVRQPRPVTEKLPANHPLFTGQRVLDSLFPCVQGGTTAIPGAFGCGKTVISQALSKYSNSDVIIYVGCGERGNEMSEVLRDFPELTCEIDGVTESIMKRTALVANTSNMPVAAREASIYTGITLSEYFRDMGYNVAMMADSTSRWAEALREISGRLAEMPADSGYPAYLGARLATFYERAGRVKCLGNPEREGSVSIVGAVSPPGGDFSDPVTSATLGIVQVFWGLDKKLAQRKHFPSINWLISYSKYMRALDEYYDKNYPEFVPLRTKVKEILQEEEDLSEIVQLVGKASLAETDKVTLEVAKLLKDDFLQQNSYSPYDRVCPFYKTVGMLRNIMAFYETARHAVESTAQSDNKITWNTIRESMGGIMYQLSSMKFKDPVKDGEQKIKADYDQLYEDLQQAFRNLED</sequence>
<proteinExistence type="evidence at transcript level"/>
<feature type="chain" id="PRO_0000144566" description="V-type proton ATPase catalytic subunit A isoform 1">
    <location>
        <begin position="1"/>
        <end position="614"/>
    </location>
</feature>
<feature type="binding site" evidence="4">
    <location>
        <begin position="247"/>
        <end position="254"/>
    </location>
    <ligand>
        <name>ATP</name>
        <dbReference type="ChEBI" id="CHEBI:30616"/>
    </ligand>
</feature>
<protein>
    <recommendedName>
        <fullName>V-type proton ATPase catalytic subunit A isoform 1</fullName>
        <shortName>V-ATPase subunit A 1</shortName>
        <ecNumber evidence="3">7.1.2.2</ecNumber>
    </recommendedName>
    <alternativeName>
        <fullName>V-ATPase 69 kDa subunit 1</fullName>
    </alternativeName>
    <alternativeName>
        <fullName>Vacuolar proton pump subunit alpha 1</fullName>
    </alternativeName>
</protein>
<reference key="1">
    <citation type="journal article" date="1997" name="J. Exp. Biol.">
        <title>Molecular genetic analysis of V-ATPase function in Drosophila melanogaster.</title>
        <authorList>
            <person name="Dow J.A.T."/>
            <person name="Davies S.A."/>
            <person name="Guo Y."/>
            <person name="Graham S."/>
            <person name="Finbow M.E."/>
            <person name="Kaiser K."/>
        </authorList>
    </citation>
    <scope>NUCLEOTIDE SEQUENCE [MRNA]</scope>
    <source>
        <tissue>Head</tissue>
    </source>
</reference>
<reference key="2">
    <citation type="submission" date="1999-09" db="EMBL/GenBank/DDBJ databases">
        <title>Molecular characterization and mutagenesis of the genes encoding two differentially expressed isoforms of the V-ATPase A-subunit in Drosophila melanogaster.</title>
        <authorList>
            <person name="Guo Y."/>
            <person name="Dow J.A.T."/>
            <person name="Kaiser K."/>
        </authorList>
    </citation>
    <scope>NUCLEOTIDE SEQUENCE [GENOMIC DNA]</scope>
    <source>
        <tissue>Head</tissue>
    </source>
</reference>
<reference key="3">
    <citation type="journal article" date="2000" name="Science">
        <title>The genome sequence of Drosophila melanogaster.</title>
        <authorList>
            <person name="Adams M.D."/>
            <person name="Celniker S.E."/>
            <person name="Holt R.A."/>
            <person name="Evans C.A."/>
            <person name="Gocayne J.D."/>
            <person name="Amanatides P.G."/>
            <person name="Scherer S.E."/>
            <person name="Li P.W."/>
            <person name="Hoskins R.A."/>
            <person name="Galle R.F."/>
            <person name="George R.A."/>
            <person name="Lewis S.E."/>
            <person name="Richards S."/>
            <person name="Ashburner M."/>
            <person name="Henderson S.N."/>
            <person name="Sutton G.G."/>
            <person name="Wortman J.R."/>
            <person name="Yandell M.D."/>
            <person name="Zhang Q."/>
            <person name="Chen L.X."/>
            <person name="Brandon R.C."/>
            <person name="Rogers Y.-H.C."/>
            <person name="Blazej R.G."/>
            <person name="Champe M."/>
            <person name="Pfeiffer B.D."/>
            <person name="Wan K.H."/>
            <person name="Doyle C."/>
            <person name="Baxter E.G."/>
            <person name="Helt G."/>
            <person name="Nelson C.R."/>
            <person name="Miklos G.L.G."/>
            <person name="Abril J.F."/>
            <person name="Agbayani A."/>
            <person name="An H.-J."/>
            <person name="Andrews-Pfannkoch C."/>
            <person name="Baldwin D."/>
            <person name="Ballew R.M."/>
            <person name="Basu A."/>
            <person name="Baxendale J."/>
            <person name="Bayraktaroglu L."/>
            <person name="Beasley E.M."/>
            <person name="Beeson K.Y."/>
            <person name="Benos P.V."/>
            <person name="Berman B.P."/>
            <person name="Bhandari D."/>
            <person name="Bolshakov S."/>
            <person name="Borkova D."/>
            <person name="Botchan M.R."/>
            <person name="Bouck J."/>
            <person name="Brokstein P."/>
            <person name="Brottier P."/>
            <person name="Burtis K.C."/>
            <person name="Busam D.A."/>
            <person name="Butler H."/>
            <person name="Cadieu E."/>
            <person name="Center A."/>
            <person name="Chandra I."/>
            <person name="Cherry J.M."/>
            <person name="Cawley S."/>
            <person name="Dahlke C."/>
            <person name="Davenport L.B."/>
            <person name="Davies P."/>
            <person name="de Pablos B."/>
            <person name="Delcher A."/>
            <person name="Deng Z."/>
            <person name="Mays A.D."/>
            <person name="Dew I."/>
            <person name="Dietz S.M."/>
            <person name="Dodson K."/>
            <person name="Doup L.E."/>
            <person name="Downes M."/>
            <person name="Dugan-Rocha S."/>
            <person name="Dunkov B.C."/>
            <person name="Dunn P."/>
            <person name="Durbin K.J."/>
            <person name="Evangelista C.C."/>
            <person name="Ferraz C."/>
            <person name="Ferriera S."/>
            <person name="Fleischmann W."/>
            <person name="Fosler C."/>
            <person name="Gabrielian A.E."/>
            <person name="Garg N.S."/>
            <person name="Gelbart W.M."/>
            <person name="Glasser K."/>
            <person name="Glodek A."/>
            <person name="Gong F."/>
            <person name="Gorrell J.H."/>
            <person name="Gu Z."/>
            <person name="Guan P."/>
            <person name="Harris M."/>
            <person name="Harris N.L."/>
            <person name="Harvey D.A."/>
            <person name="Heiman T.J."/>
            <person name="Hernandez J.R."/>
            <person name="Houck J."/>
            <person name="Hostin D."/>
            <person name="Houston K.A."/>
            <person name="Howland T.J."/>
            <person name="Wei M.-H."/>
            <person name="Ibegwam C."/>
            <person name="Jalali M."/>
            <person name="Kalush F."/>
            <person name="Karpen G.H."/>
            <person name="Ke Z."/>
            <person name="Kennison J.A."/>
            <person name="Ketchum K.A."/>
            <person name="Kimmel B.E."/>
            <person name="Kodira C.D."/>
            <person name="Kraft C.L."/>
            <person name="Kravitz S."/>
            <person name="Kulp D."/>
            <person name="Lai Z."/>
            <person name="Lasko P."/>
            <person name="Lei Y."/>
            <person name="Levitsky A.A."/>
            <person name="Li J.H."/>
            <person name="Li Z."/>
            <person name="Liang Y."/>
            <person name="Lin X."/>
            <person name="Liu X."/>
            <person name="Mattei B."/>
            <person name="McIntosh T.C."/>
            <person name="McLeod M.P."/>
            <person name="McPherson D."/>
            <person name="Merkulov G."/>
            <person name="Milshina N.V."/>
            <person name="Mobarry C."/>
            <person name="Morris J."/>
            <person name="Moshrefi A."/>
            <person name="Mount S.M."/>
            <person name="Moy M."/>
            <person name="Murphy B."/>
            <person name="Murphy L."/>
            <person name="Muzny D.M."/>
            <person name="Nelson D.L."/>
            <person name="Nelson D.R."/>
            <person name="Nelson K.A."/>
            <person name="Nixon K."/>
            <person name="Nusskern D.R."/>
            <person name="Pacleb J.M."/>
            <person name="Palazzolo M."/>
            <person name="Pittman G.S."/>
            <person name="Pan S."/>
            <person name="Pollard J."/>
            <person name="Puri V."/>
            <person name="Reese M.G."/>
            <person name="Reinert K."/>
            <person name="Remington K."/>
            <person name="Saunders R.D.C."/>
            <person name="Scheeler F."/>
            <person name="Shen H."/>
            <person name="Shue B.C."/>
            <person name="Siden-Kiamos I."/>
            <person name="Simpson M."/>
            <person name="Skupski M.P."/>
            <person name="Smith T.J."/>
            <person name="Spier E."/>
            <person name="Spradling A.C."/>
            <person name="Stapleton M."/>
            <person name="Strong R."/>
            <person name="Sun E."/>
            <person name="Svirskas R."/>
            <person name="Tector C."/>
            <person name="Turner R."/>
            <person name="Venter E."/>
            <person name="Wang A.H."/>
            <person name="Wang X."/>
            <person name="Wang Z.-Y."/>
            <person name="Wassarman D.A."/>
            <person name="Weinstock G.M."/>
            <person name="Weissenbach J."/>
            <person name="Williams S.M."/>
            <person name="Woodage T."/>
            <person name="Worley K.C."/>
            <person name="Wu D."/>
            <person name="Yang S."/>
            <person name="Yao Q.A."/>
            <person name="Ye J."/>
            <person name="Yeh R.-F."/>
            <person name="Zaveri J.S."/>
            <person name="Zhan M."/>
            <person name="Zhang G."/>
            <person name="Zhao Q."/>
            <person name="Zheng L."/>
            <person name="Zheng X.H."/>
            <person name="Zhong F.N."/>
            <person name="Zhong W."/>
            <person name="Zhou X."/>
            <person name="Zhu S.C."/>
            <person name="Zhu X."/>
            <person name="Smith H.O."/>
            <person name="Gibbs R.A."/>
            <person name="Myers E.W."/>
            <person name="Rubin G.M."/>
            <person name="Venter J.C."/>
        </authorList>
    </citation>
    <scope>NUCLEOTIDE SEQUENCE [LARGE SCALE GENOMIC DNA]</scope>
    <source>
        <strain>Berkeley</strain>
    </source>
</reference>
<reference key="4">
    <citation type="journal article" date="2002" name="Genome Biol.">
        <title>Annotation of the Drosophila melanogaster euchromatic genome: a systematic review.</title>
        <authorList>
            <person name="Misra S."/>
            <person name="Crosby M.A."/>
            <person name="Mungall C.J."/>
            <person name="Matthews B.B."/>
            <person name="Campbell K.S."/>
            <person name="Hradecky P."/>
            <person name="Huang Y."/>
            <person name="Kaminker J.S."/>
            <person name="Millburn G.H."/>
            <person name="Prochnik S.E."/>
            <person name="Smith C.D."/>
            <person name="Tupy J.L."/>
            <person name="Whitfield E.J."/>
            <person name="Bayraktaroglu L."/>
            <person name="Berman B.P."/>
            <person name="Bettencourt B.R."/>
            <person name="Celniker S.E."/>
            <person name="de Grey A.D.N.J."/>
            <person name="Drysdale R.A."/>
            <person name="Harris N.L."/>
            <person name="Richter J."/>
            <person name="Russo S."/>
            <person name="Schroeder A.J."/>
            <person name="Shu S.Q."/>
            <person name="Stapleton M."/>
            <person name="Yamada C."/>
            <person name="Ashburner M."/>
            <person name="Gelbart W.M."/>
            <person name="Rubin G.M."/>
            <person name="Lewis S.E."/>
        </authorList>
    </citation>
    <scope>GENOME REANNOTATION</scope>
    <source>
        <strain>Berkeley</strain>
    </source>
</reference>
<reference key="5">
    <citation type="submission" date="2003-12" db="EMBL/GenBank/DDBJ databases">
        <authorList>
            <person name="Stapleton M."/>
            <person name="Brokstein P."/>
            <person name="Hong L."/>
            <person name="Agbayani A."/>
            <person name="Carlson J.W."/>
            <person name="Champe M."/>
            <person name="Chavez C."/>
            <person name="Dorsett V."/>
            <person name="Dresnek D."/>
            <person name="Farfan D."/>
            <person name="Frise E."/>
            <person name="George R.A."/>
            <person name="Gonzalez M."/>
            <person name="Guarin H."/>
            <person name="Kronmiller B."/>
            <person name="Li P.W."/>
            <person name="Liao G."/>
            <person name="Miranda A."/>
            <person name="Mungall C.J."/>
            <person name="Nunoo J."/>
            <person name="Pacleb J.M."/>
            <person name="Paragas V."/>
            <person name="Park S."/>
            <person name="Patel S."/>
            <person name="Phouanenavong S."/>
            <person name="Wan K.H."/>
            <person name="Yu C."/>
            <person name="Lewis S.E."/>
            <person name="Rubin G.M."/>
            <person name="Celniker S.E."/>
        </authorList>
    </citation>
    <scope>NUCLEOTIDE SEQUENCE [LARGE SCALE MRNA]</scope>
    <source>
        <strain>Berkeley</strain>
        <tissue>Head</tissue>
    </source>
</reference>
<keyword id="KW-0067">ATP-binding</keyword>
<keyword id="KW-0375">Hydrogen ion transport</keyword>
<keyword id="KW-0406">Ion transport</keyword>
<keyword id="KW-0547">Nucleotide-binding</keyword>
<keyword id="KW-1185">Reference proteome</keyword>
<keyword id="KW-1278">Translocase</keyword>
<keyword id="KW-0813">Transport</keyword>
<organism>
    <name type="scientific">Drosophila melanogaster</name>
    <name type="common">Fruit fly</name>
    <dbReference type="NCBI Taxonomy" id="7227"/>
    <lineage>
        <taxon>Eukaryota</taxon>
        <taxon>Metazoa</taxon>
        <taxon>Ecdysozoa</taxon>
        <taxon>Arthropoda</taxon>
        <taxon>Hexapoda</taxon>
        <taxon>Insecta</taxon>
        <taxon>Pterygota</taxon>
        <taxon>Neoptera</taxon>
        <taxon>Endopterygota</taxon>
        <taxon>Diptera</taxon>
        <taxon>Brachycera</taxon>
        <taxon>Muscomorpha</taxon>
        <taxon>Ephydroidea</taxon>
        <taxon>Drosophilidae</taxon>
        <taxon>Drosophila</taxon>
        <taxon>Sophophora</taxon>
    </lineage>
</organism>